<sequence>MLSDIEIAGAATLRPITEVATESLGIGAEHLVPYGHYKAKVGITYLNSLADRPLGRLILVTALSPTPPGEGKTTTSVGLTDALHGLGKRAIACLREPSMGPVFGLKGGAAGGGYSQVVPMTDINLHFTGDFAAIAAANNLLAALIDNHVHHGNELDIDVRSVTWKRVLDTNDRALREVVVGLGGPPNGFPRQDGFDIVVASELMAIFCLTESWADLKRRIGDIVIGYSRAGAPVTARDLGADGAMAVLLRDAIAPNLVQTLEGAPALVHGGPFANIAHGCSSVMATRAGLRLADYVVTEAGFGADLGAEKFIDIKCRMSGMRPDVAVVVATVRALKYHGGVALADLDREDLGAVEAGMDNLRRHLDNLRHLNGVPCVVAVNRFPTDTDLEVVRVVELAASYGVPAYQATHFTDGGIGAQDLAKGVLQALEEPARDEFSFTYPDELSLTEKVEAVATRVYGAGQVTWDGKARKRLARIERDGYGTLPVCVAKTQYSFSTDPGLLGAPTGHELRVREVRLSAGAGFVVVICGDMMTMPGLPTRPAATRIDLADDGTIIGLS</sequence>
<evidence type="ECO:0000255" key="1">
    <source>
        <dbReference type="HAMAP-Rule" id="MF_01543"/>
    </source>
</evidence>
<accession>A1SQH3</accession>
<feature type="chain" id="PRO_0000293049" description="Formate--tetrahydrofolate ligase">
    <location>
        <begin position="1"/>
        <end position="559"/>
    </location>
</feature>
<feature type="binding site" evidence="1">
    <location>
        <begin position="66"/>
        <end position="73"/>
    </location>
    <ligand>
        <name>ATP</name>
        <dbReference type="ChEBI" id="CHEBI:30616"/>
    </ligand>
</feature>
<name>FTHS_NOCSJ</name>
<organism>
    <name type="scientific">Nocardioides sp. (strain ATCC BAA-499 / JS614)</name>
    <dbReference type="NCBI Taxonomy" id="196162"/>
    <lineage>
        <taxon>Bacteria</taxon>
        <taxon>Bacillati</taxon>
        <taxon>Actinomycetota</taxon>
        <taxon>Actinomycetes</taxon>
        <taxon>Propionibacteriales</taxon>
        <taxon>Nocardioidaceae</taxon>
        <taxon>Nocardioides</taxon>
    </lineage>
</organism>
<protein>
    <recommendedName>
        <fullName evidence="1">Formate--tetrahydrofolate ligase</fullName>
        <ecNumber evidence="1">6.3.4.3</ecNumber>
    </recommendedName>
    <alternativeName>
        <fullName evidence="1">Formyltetrahydrofolate synthetase</fullName>
        <shortName evidence="1">FHS</shortName>
        <shortName evidence="1">FTHFS</shortName>
    </alternativeName>
</protein>
<comment type="catalytic activity">
    <reaction evidence="1">
        <text>(6S)-5,6,7,8-tetrahydrofolate + formate + ATP = (6R)-10-formyltetrahydrofolate + ADP + phosphate</text>
        <dbReference type="Rhea" id="RHEA:20221"/>
        <dbReference type="ChEBI" id="CHEBI:15740"/>
        <dbReference type="ChEBI" id="CHEBI:30616"/>
        <dbReference type="ChEBI" id="CHEBI:43474"/>
        <dbReference type="ChEBI" id="CHEBI:57453"/>
        <dbReference type="ChEBI" id="CHEBI:195366"/>
        <dbReference type="ChEBI" id="CHEBI:456216"/>
        <dbReference type="EC" id="6.3.4.3"/>
    </reaction>
</comment>
<comment type="pathway">
    <text evidence="1">One-carbon metabolism; tetrahydrofolate interconversion.</text>
</comment>
<comment type="similarity">
    <text evidence="1">Belongs to the formate--tetrahydrofolate ligase family.</text>
</comment>
<proteinExistence type="inferred from homology"/>
<gene>
    <name evidence="1" type="primary">fhs</name>
    <name type="ordered locus">Noca_4561</name>
</gene>
<reference key="1">
    <citation type="submission" date="2006-12" db="EMBL/GenBank/DDBJ databases">
        <title>Complete sequence of chromosome 1 of Nocardioides sp. JS614.</title>
        <authorList>
            <person name="Copeland A."/>
            <person name="Lucas S."/>
            <person name="Lapidus A."/>
            <person name="Barry K."/>
            <person name="Detter J.C."/>
            <person name="Glavina del Rio T."/>
            <person name="Hammon N."/>
            <person name="Israni S."/>
            <person name="Dalin E."/>
            <person name="Tice H."/>
            <person name="Pitluck S."/>
            <person name="Thompson L.S."/>
            <person name="Brettin T."/>
            <person name="Bruce D."/>
            <person name="Han C."/>
            <person name="Tapia R."/>
            <person name="Schmutz J."/>
            <person name="Larimer F."/>
            <person name="Land M."/>
            <person name="Hauser L."/>
            <person name="Kyrpides N."/>
            <person name="Kim E."/>
            <person name="Mattes T."/>
            <person name="Gossett J."/>
            <person name="Richardson P."/>
        </authorList>
    </citation>
    <scope>NUCLEOTIDE SEQUENCE [LARGE SCALE GENOMIC DNA]</scope>
    <source>
        <strain>ATCC BAA-499 / JS614</strain>
    </source>
</reference>
<dbReference type="EC" id="6.3.4.3" evidence="1"/>
<dbReference type="EMBL" id="CP000509">
    <property type="protein sequence ID" value="ABL84058.1"/>
    <property type="molecule type" value="Genomic_DNA"/>
</dbReference>
<dbReference type="RefSeq" id="WP_011757986.1">
    <property type="nucleotide sequence ID" value="NC_008699.1"/>
</dbReference>
<dbReference type="SMR" id="A1SQH3"/>
<dbReference type="STRING" id="196162.Noca_4561"/>
<dbReference type="KEGG" id="nca:Noca_4561"/>
<dbReference type="eggNOG" id="COG2759">
    <property type="taxonomic scope" value="Bacteria"/>
</dbReference>
<dbReference type="HOGENOM" id="CLU_003601_3_3_11"/>
<dbReference type="OrthoDB" id="9761733at2"/>
<dbReference type="UniPathway" id="UPA00193"/>
<dbReference type="Proteomes" id="UP000000640">
    <property type="component" value="Chromosome"/>
</dbReference>
<dbReference type="GO" id="GO:0005524">
    <property type="term" value="F:ATP binding"/>
    <property type="evidence" value="ECO:0007669"/>
    <property type="project" value="UniProtKB-UniRule"/>
</dbReference>
<dbReference type="GO" id="GO:0004329">
    <property type="term" value="F:formate-tetrahydrofolate ligase activity"/>
    <property type="evidence" value="ECO:0007669"/>
    <property type="project" value="UniProtKB-UniRule"/>
</dbReference>
<dbReference type="GO" id="GO:0035999">
    <property type="term" value="P:tetrahydrofolate interconversion"/>
    <property type="evidence" value="ECO:0007669"/>
    <property type="project" value="UniProtKB-UniRule"/>
</dbReference>
<dbReference type="CDD" id="cd00477">
    <property type="entry name" value="FTHFS"/>
    <property type="match status" value="1"/>
</dbReference>
<dbReference type="FunFam" id="3.30.1510.10:FF:000001">
    <property type="entry name" value="Formate--tetrahydrofolate ligase"/>
    <property type="match status" value="1"/>
</dbReference>
<dbReference type="FunFam" id="3.10.410.10:FF:000001">
    <property type="entry name" value="Putative formate--tetrahydrofolate ligase"/>
    <property type="match status" value="1"/>
</dbReference>
<dbReference type="Gene3D" id="3.30.1510.10">
    <property type="entry name" value="Domain 2, N(10)-formyltetrahydrofolate synthetase"/>
    <property type="match status" value="1"/>
</dbReference>
<dbReference type="Gene3D" id="3.10.410.10">
    <property type="entry name" value="Formyltetrahydrofolate synthetase, domain 3"/>
    <property type="match status" value="1"/>
</dbReference>
<dbReference type="Gene3D" id="3.40.50.300">
    <property type="entry name" value="P-loop containing nucleotide triphosphate hydrolases"/>
    <property type="match status" value="1"/>
</dbReference>
<dbReference type="HAMAP" id="MF_01543">
    <property type="entry name" value="FTHFS"/>
    <property type="match status" value="1"/>
</dbReference>
<dbReference type="InterPro" id="IPR000559">
    <property type="entry name" value="Formate_THF_ligase"/>
</dbReference>
<dbReference type="InterPro" id="IPR020628">
    <property type="entry name" value="Formate_THF_ligase_CS"/>
</dbReference>
<dbReference type="InterPro" id="IPR027417">
    <property type="entry name" value="P-loop_NTPase"/>
</dbReference>
<dbReference type="NCBIfam" id="NF010030">
    <property type="entry name" value="PRK13505.1"/>
    <property type="match status" value="1"/>
</dbReference>
<dbReference type="Pfam" id="PF01268">
    <property type="entry name" value="FTHFS"/>
    <property type="match status" value="1"/>
</dbReference>
<dbReference type="SUPFAM" id="SSF52540">
    <property type="entry name" value="P-loop containing nucleoside triphosphate hydrolases"/>
    <property type="match status" value="1"/>
</dbReference>
<dbReference type="PROSITE" id="PS00721">
    <property type="entry name" value="FTHFS_1"/>
    <property type="match status" value="1"/>
</dbReference>
<dbReference type="PROSITE" id="PS00722">
    <property type="entry name" value="FTHFS_2"/>
    <property type="match status" value="1"/>
</dbReference>
<keyword id="KW-0067">ATP-binding</keyword>
<keyword id="KW-0436">Ligase</keyword>
<keyword id="KW-0547">Nucleotide-binding</keyword>
<keyword id="KW-0554">One-carbon metabolism</keyword>
<keyword id="KW-1185">Reference proteome</keyword>